<organism>
    <name type="scientific">Brucella abortus (strain 2308)</name>
    <dbReference type="NCBI Taxonomy" id="359391"/>
    <lineage>
        <taxon>Bacteria</taxon>
        <taxon>Pseudomonadati</taxon>
        <taxon>Pseudomonadota</taxon>
        <taxon>Alphaproteobacteria</taxon>
        <taxon>Hyphomicrobiales</taxon>
        <taxon>Brucellaceae</taxon>
        <taxon>Brucella/Ochrobactrum group</taxon>
        <taxon>Brucella</taxon>
    </lineage>
</organism>
<name>MUTL_BRUA2</name>
<gene>
    <name evidence="1" type="primary">mutL</name>
    <name type="ordered locus">BAB2_0212</name>
</gene>
<keyword id="KW-0227">DNA damage</keyword>
<keyword id="KW-0234">DNA repair</keyword>
<keyword id="KW-1185">Reference proteome</keyword>
<reference key="1">
    <citation type="journal article" date="2005" name="Infect. Immun.">
        <title>Whole-genome analyses of speciation events in pathogenic Brucellae.</title>
        <authorList>
            <person name="Chain P.S."/>
            <person name="Comerci D.J."/>
            <person name="Tolmasky M.E."/>
            <person name="Larimer F.W."/>
            <person name="Malfatti S.A."/>
            <person name="Vergez L.M."/>
            <person name="Aguero F."/>
            <person name="Land M.L."/>
            <person name="Ugalde R.A."/>
            <person name="Garcia E."/>
        </authorList>
    </citation>
    <scope>NUCLEOTIDE SEQUENCE [LARGE SCALE GENOMIC DNA]</scope>
    <source>
        <strain>2308</strain>
    </source>
</reference>
<proteinExistence type="inferred from homology"/>
<sequence length="623" mass="66783">MTIRHLSETIINQIAAGEVIERPASVIKELVENAIDAGATRIEVVTAGGGKTLLRVTDNGSGIPADELALAVSRHCTSKLTDDVHDIRALGFRGEALPSIGSVSKLTLKSRPQDADSGFEVCVTGGHLDGPRPTALNRGTIVEVRDLFYATPARLKFMKTDRAEATAITDVVKRIGIAFPHIRFSLAGTDRTPFEMPATGTGAEATLERIGQVLGREFGENALAIDAERDGVRLAGFVGIPSFNRGNALHQFAYVNGRPVRDKQIFGALRGAYSDVIARDRHPVAVLFLTLDPALVDVNVHPAKADVRFRDPGLVRGLIVGAIKQALAQSGIRPATSGAEAMLQAFRAEGFGAQQSAPRPANSYSPASWRTAPPAPRSEWSPQTAHPAHRPLDLQAAPALRENGQAVLGDVAVPAADARASVAEAPVELMQKPLGAARAQIHENYIVAQTEDSLVIVDQHAAHERLVYEALKNALHARPIAGQMLLIPEIVDLPEEDAQRLAGHAETLARFGLGVEQFGPGAIAVRETPAMLGEMNVQQLIRDLADEIAEHDTADGLKAMLHHVAATMACHGSVRSGRRLKPEEMNALLRDMEATPGSGTCNHGRPTYIELKLTDIERLFGRR</sequence>
<comment type="function">
    <text evidence="1">This protein is involved in the repair of mismatches in DNA. It is required for dam-dependent methyl-directed DNA mismatch repair. May act as a 'molecular matchmaker', a protein that promotes the formation of a stable complex between two or more DNA-binding proteins in an ATP-dependent manner without itself being part of a final effector complex.</text>
</comment>
<comment type="similarity">
    <text evidence="1">Belongs to the DNA mismatch repair MutL/HexB family.</text>
</comment>
<protein>
    <recommendedName>
        <fullName evidence="1">DNA mismatch repair protein MutL</fullName>
    </recommendedName>
</protein>
<accession>Q2YIH2</accession>
<feature type="chain" id="PRO_1000009997" description="DNA mismatch repair protein MutL">
    <location>
        <begin position="1"/>
        <end position="623"/>
    </location>
</feature>
<feature type="region of interest" description="Disordered" evidence="2">
    <location>
        <begin position="353"/>
        <end position="389"/>
    </location>
</feature>
<feature type="compositionally biased region" description="Polar residues" evidence="2">
    <location>
        <begin position="353"/>
        <end position="368"/>
    </location>
</feature>
<dbReference type="EMBL" id="AM040265">
    <property type="protein sequence ID" value="CAJ12378.1"/>
    <property type="molecule type" value="Genomic_DNA"/>
</dbReference>
<dbReference type="RefSeq" id="WP_002966364.1">
    <property type="nucleotide sequence ID" value="NZ_KN046823.1"/>
</dbReference>
<dbReference type="SMR" id="Q2YIH2"/>
<dbReference type="STRING" id="359391.BAB2_0212"/>
<dbReference type="GeneID" id="97535595"/>
<dbReference type="KEGG" id="bmf:BAB2_0212"/>
<dbReference type="PATRIC" id="fig|359391.11.peg.2162"/>
<dbReference type="HOGENOM" id="CLU_004131_4_2_5"/>
<dbReference type="Proteomes" id="UP000002719">
    <property type="component" value="Chromosome II"/>
</dbReference>
<dbReference type="GO" id="GO:0032300">
    <property type="term" value="C:mismatch repair complex"/>
    <property type="evidence" value="ECO:0007669"/>
    <property type="project" value="InterPro"/>
</dbReference>
<dbReference type="GO" id="GO:0005524">
    <property type="term" value="F:ATP binding"/>
    <property type="evidence" value="ECO:0007669"/>
    <property type="project" value="InterPro"/>
</dbReference>
<dbReference type="GO" id="GO:0016887">
    <property type="term" value="F:ATP hydrolysis activity"/>
    <property type="evidence" value="ECO:0007669"/>
    <property type="project" value="InterPro"/>
</dbReference>
<dbReference type="GO" id="GO:0140664">
    <property type="term" value="F:ATP-dependent DNA damage sensor activity"/>
    <property type="evidence" value="ECO:0007669"/>
    <property type="project" value="InterPro"/>
</dbReference>
<dbReference type="GO" id="GO:0030983">
    <property type="term" value="F:mismatched DNA binding"/>
    <property type="evidence" value="ECO:0007669"/>
    <property type="project" value="InterPro"/>
</dbReference>
<dbReference type="GO" id="GO:0006298">
    <property type="term" value="P:mismatch repair"/>
    <property type="evidence" value="ECO:0007669"/>
    <property type="project" value="UniProtKB-UniRule"/>
</dbReference>
<dbReference type="CDD" id="cd16926">
    <property type="entry name" value="HATPase_MutL-MLH-PMS-like"/>
    <property type="match status" value="1"/>
</dbReference>
<dbReference type="CDD" id="cd00782">
    <property type="entry name" value="MutL_Trans"/>
    <property type="match status" value="1"/>
</dbReference>
<dbReference type="FunFam" id="3.30.565.10:FF:000003">
    <property type="entry name" value="DNA mismatch repair endonuclease MutL"/>
    <property type="match status" value="1"/>
</dbReference>
<dbReference type="Gene3D" id="3.30.230.10">
    <property type="match status" value="1"/>
</dbReference>
<dbReference type="Gene3D" id="3.30.565.10">
    <property type="entry name" value="Histidine kinase-like ATPase, C-terminal domain"/>
    <property type="match status" value="1"/>
</dbReference>
<dbReference type="Gene3D" id="3.30.1540.20">
    <property type="entry name" value="MutL, C-terminal domain, dimerisation subdomain"/>
    <property type="match status" value="1"/>
</dbReference>
<dbReference type="Gene3D" id="3.30.1370.100">
    <property type="entry name" value="MutL, C-terminal domain, regulatory subdomain"/>
    <property type="match status" value="1"/>
</dbReference>
<dbReference type="HAMAP" id="MF_00149">
    <property type="entry name" value="DNA_mis_repair"/>
    <property type="match status" value="1"/>
</dbReference>
<dbReference type="InterPro" id="IPR014762">
    <property type="entry name" value="DNA_mismatch_repair_CS"/>
</dbReference>
<dbReference type="InterPro" id="IPR020667">
    <property type="entry name" value="DNA_mismatch_repair_MutL"/>
</dbReference>
<dbReference type="InterPro" id="IPR013507">
    <property type="entry name" value="DNA_mismatch_S5_2-like"/>
</dbReference>
<dbReference type="InterPro" id="IPR036890">
    <property type="entry name" value="HATPase_C_sf"/>
</dbReference>
<dbReference type="InterPro" id="IPR002099">
    <property type="entry name" value="MutL/Mlh/PMS"/>
</dbReference>
<dbReference type="InterPro" id="IPR038973">
    <property type="entry name" value="MutL/Mlh/Pms-like"/>
</dbReference>
<dbReference type="InterPro" id="IPR014790">
    <property type="entry name" value="MutL_C"/>
</dbReference>
<dbReference type="InterPro" id="IPR042120">
    <property type="entry name" value="MutL_C_dimsub"/>
</dbReference>
<dbReference type="InterPro" id="IPR042121">
    <property type="entry name" value="MutL_C_regsub"/>
</dbReference>
<dbReference type="InterPro" id="IPR037198">
    <property type="entry name" value="MutL_C_sf"/>
</dbReference>
<dbReference type="InterPro" id="IPR020568">
    <property type="entry name" value="Ribosomal_Su5_D2-typ_SF"/>
</dbReference>
<dbReference type="InterPro" id="IPR014721">
    <property type="entry name" value="Ribsml_uS5_D2-typ_fold_subgr"/>
</dbReference>
<dbReference type="NCBIfam" id="TIGR00585">
    <property type="entry name" value="mutl"/>
    <property type="match status" value="1"/>
</dbReference>
<dbReference type="NCBIfam" id="NF000953">
    <property type="entry name" value="PRK00095.2-4"/>
    <property type="match status" value="1"/>
</dbReference>
<dbReference type="PANTHER" id="PTHR10073">
    <property type="entry name" value="DNA MISMATCH REPAIR PROTEIN MLH, PMS, MUTL"/>
    <property type="match status" value="1"/>
</dbReference>
<dbReference type="PANTHER" id="PTHR10073:SF12">
    <property type="entry name" value="DNA MISMATCH REPAIR PROTEIN MLH1"/>
    <property type="match status" value="1"/>
</dbReference>
<dbReference type="Pfam" id="PF01119">
    <property type="entry name" value="DNA_mis_repair"/>
    <property type="match status" value="1"/>
</dbReference>
<dbReference type="Pfam" id="PF13589">
    <property type="entry name" value="HATPase_c_3"/>
    <property type="match status" value="1"/>
</dbReference>
<dbReference type="Pfam" id="PF08676">
    <property type="entry name" value="MutL_C"/>
    <property type="match status" value="1"/>
</dbReference>
<dbReference type="SMART" id="SM01340">
    <property type="entry name" value="DNA_mis_repair"/>
    <property type="match status" value="1"/>
</dbReference>
<dbReference type="SMART" id="SM00853">
    <property type="entry name" value="MutL_C"/>
    <property type="match status" value="1"/>
</dbReference>
<dbReference type="SUPFAM" id="SSF55874">
    <property type="entry name" value="ATPase domain of HSP90 chaperone/DNA topoisomerase II/histidine kinase"/>
    <property type="match status" value="1"/>
</dbReference>
<dbReference type="SUPFAM" id="SSF118116">
    <property type="entry name" value="DNA mismatch repair protein MutL"/>
    <property type="match status" value="1"/>
</dbReference>
<dbReference type="SUPFAM" id="SSF54211">
    <property type="entry name" value="Ribosomal protein S5 domain 2-like"/>
    <property type="match status" value="1"/>
</dbReference>
<dbReference type="PROSITE" id="PS00058">
    <property type="entry name" value="DNA_MISMATCH_REPAIR_1"/>
    <property type="match status" value="1"/>
</dbReference>
<evidence type="ECO:0000255" key="1">
    <source>
        <dbReference type="HAMAP-Rule" id="MF_00149"/>
    </source>
</evidence>
<evidence type="ECO:0000256" key="2">
    <source>
        <dbReference type="SAM" id="MobiDB-lite"/>
    </source>
</evidence>